<accession>A9NAT6</accession>
<feature type="chain" id="PRO_1000086623" description="Large ribosomal subunit protein bL25">
    <location>
        <begin position="1"/>
        <end position="244"/>
    </location>
</feature>
<feature type="region of interest" description="Disordered" evidence="2">
    <location>
        <begin position="197"/>
        <end position="244"/>
    </location>
</feature>
<feature type="compositionally biased region" description="Low complexity" evidence="2">
    <location>
        <begin position="204"/>
        <end position="215"/>
    </location>
</feature>
<reference key="1">
    <citation type="submission" date="2007-11" db="EMBL/GenBank/DDBJ databases">
        <title>Genome sequencing of phylogenetically and phenotypically diverse Coxiella burnetii isolates.</title>
        <authorList>
            <person name="Seshadri R."/>
            <person name="Samuel J.E."/>
        </authorList>
    </citation>
    <scope>NUCLEOTIDE SEQUENCE [LARGE SCALE GENOMIC DNA]</scope>
    <source>
        <strain>RSA 331 / Henzerling II</strain>
    </source>
</reference>
<comment type="function">
    <text evidence="1">This is one of the proteins that binds to the 5S RNA in the ribosome where it forms part of the central protuberance.</text>
</comment>
<comment type="subunit">
    <text evidence="1">Part of the 50S ribosomal subunit; part of the 5S rRNA/L5/L18/L25 subcomplex. Contacts the 5S rRNA. Binds to the 5S rRNA independently of L5 and L18.</text>
</comment>
<comment type="similarity">
    <text evidence="1">Belongs to the bacterial ribosomal protein bL25 family. CTC subfamily.</text>
</comment>
<dbReference type="EMBL" id="CP000890">
    <property type="protein sequence ID" value="ABX77751.1"/>
    <property type="molecule type" value="Genomic_DNA"/>
</dbReference>
<dbReference type="RefSeq" id="WP_005770208.1">
    <property type="nucleotide sequence ID" value="NC_010117.1"/>
</dbReference>
<dbReference type="SMR" id="A9NAT6"/>
<dbReference type="KEGG" id="cbs:COXBURSA331_A2041"/>
<dbReference type="HOGENOM" id="CLU_075939_0_1_6"/>
<dbReference type="GO" id="GO:0022625">
    <property type="term" value="C:cytosolic large ribosomal subunit"/>
    <property type="evidence" value="ECO:0007669"/>
    <property type="project" value="TreeGrafter"/>
</dbReference>
<dbReference type="GO" id="GO:0008097">
    <property type="term" value="F:5S rRNA binding"/>
    <property type="evidence" value="ECO:0007669"/>
    <property type="project" value="InterPro"/>
</dbReference>
<dbReference type="GO" id="GO:0003735">
    <property type="term" value="F:structural constituent of ribosome"/>
    <property type="evidence" value="ECO:0007669"/>
    <property type="project" value="InterPro"/>
</dbReference>
<dbReference type="GO" id="GO:0006412">
    <property type="term" value="P:translation"/>
    <property type="evidence" value="ECO:0007669"/>
    <property type="project" value="UniProtKB-UniRule"/>
</dbReference>
<dbReference type="CDD" id="cd00495">
    <property type="entry name" value="Ribosomal_L25_TL5_CTC"/>
    <property type="match status" value="1"/>
</dbReference>
<dbReference type="FunFam" id="2.170.120.20:FF:000003">
    <property type="entry name" value="50S ribosomal protein L25"/>
    <property type="match status" value="1"/>
</dbReference>
<dbReference type="Gene3D" id="2.170.120.20">
    <property type="entry name" value="Ribosomal protein L25, beta domain"/>
    <property type="match status" value="1"/>
</dbReference>
<dbReference type="Gene3D" id="2.40.240.10">
    <property type="entry name" value="Ribosomal Protein L25, Chain P"/>
    <property type="match status" value="1"/>
</dbReference>
<dbReference type="HAMAP" id="MF_01334">
    <property type="entry name" value="Ribosomal_bL25_CTC"/>
    <property type="match status" value="1"/>
</dbReference>
<dbReference type="InterPro" id="IPR020056">
    <property type="entry name" value="Rbsml_bL25/Gln-tRNA_synth_N"/>
</dbReference>
<dbReference type="InterPro" id="IPR011035">
    <property type="entry name" value="Ribosomal_bL25/Gln-tRNA_synth"/>
</dbReference>
<dbReference type="InterPro" id="IPR020057">
    <property type="entry name" value="Ribosomal_bL25_b-dom"/>
</dbReference>
<dbReference type="InterPro" id="IPR037121">
    <property type="entry name" value="Ribosomal_bL25_C"/>
</dbReference>
<dbReference type="InterPro" id="IPR001021">
    <property type="entry name" value="Ribosomal_bL25_long"/>
</dbReference>
<dbReference type="InterPro" id="IPR029751">
    <property type="entry name" value="Ribosomal_L25_dom"/>
</dbReference>
<dbReference type="InterPro" id="IPR020930">
    <property type="entry name" value="Ribosomal_uL5_bac-type"/>
</dbReference>
<dbReference type="NCBIfam" id="TIGR00731">
    <property type="entry name" value="bL25_bact_ctc"/>
    <property type="match status" value="1"/>
</dbReference>
<dbReference type="NCBIfam" id="NF004128">
    <property type="entry name" value="PRK05618.1-2"/>
    <property type="match status" value="1"/>
</dbReference>
<dbReference type="NCBIfam" id="NF004130">
    <property type="entry name" value="PRK05618.1-5"/>
    <property type="match status" value="1"/>
</dbReference>
<dbReference type="NCBIfam" id="NF004612">
    <property type="entry name" value="PRK05943.1"/>
    <property type="match status" value="1"/>
</dbReference>
<dbReference type="PANTHER" id="PTHR33284">
    <property type="entry name" value="RIBOSOMAL PROTEIN L25/GLN-TRNA SYNTHETASE, ANTI-CODON-BINDING DOMAIN-CONTAINING PROTEIN"/>
    <property type="match status" value="1"/>
</dbReference>
<dbReference type="PANTHER" id="PTHR33284:SF1">
    <property type="entry name" value="RIBOSOMAL PROTEIN L25_GLN-TRNA SYNTHETASE, ANTI-CODON-BINDING DOMAIN-CONTAINING PROTEIN"/>
    <property type="match status" value="1"/>
</dbReference>
<dbReference type="Pfam" id="PF01386">
    <property type="entry name" value="Ribosomal_L25p"/>
    <property type="match status" value="1"/>
</dbReference>
<dbReference type="Pfam" id="PF14693">
    <property type="entry name" value="Ribosomal_TL5_C"/>
    <property type="match status" value="1"/>
</dbReference>
<dbReference type="SUPFAM" id="SSF50715">
    <property type="entry name" value="Ribosomal protein L25-like"/>
    <property type="match status" value="1"/>
</dbReference>
<keyword id="KW-0687">Ribonucleoprotein</keyword>
<keyword id="KW-0689">Ribosomal protein</keyword>
<keyword id="KW-0694">RNA-binding</keyword>
<keyword id="KW-0699">rRNA-binding</keyword>
<sequence>MAAESFELIAELREFTGKSAARRMRRFEDKVPGTVYGAGKAPQSITLLQKDLLKALESESTFSSILTLKVGDKKQKVILKALQRHHTKPKIVHIDFQRIKASEKLIMNVPLHFLGEDDCPGVEAGGVVSHLQSEVEIRCLPADLPEYIEVDLSHLQLDESVHLSNLKLPAGVGLTSAVDEEHDSPIASVHMPRVSKADVEAEAAEAALAKEAATEAAEEEETEKPASEAEASGEAEQADTDKKE</sequence>
<name>RL25_COXBR</name>
<organism>
    <name type="scientific">Coxiella burnetii (strain RSA 331 / Henzerling II)</name>
    <dbReference type="NCBI Taxonomy" id="360115"/>
    <lineage>
        <taxon>Bacteria</taxon>
        <taxon>Pseudomonadati</taxon>
        <taxon>Pseudomonadota</taxon>
        <taxon>Gammaproteobacteria</taxon>
        <taxon>Legionellales</taxon>
        <taxon>Coxiellaceae</taxon>
        <taxon>Coxiella</taxon>
    </lineage>
</organism>
<protein>
    <recommendedName>
        <fullName evidence="1">Large ribosomal subunit protein bL25</fullName>
    </recommendedName>
    <alternativeName>
        <fullName evidence="3">50S ribosomal protein L25</fullName>
    </alternativeName>
    <alternativeName>
        <fullName evidence="1">General stress protein CTC</fullName>
    </alternativeName>
</protein>
<evidence type="ECO:0000255" key="1">
    <source>
        <dbReference type="HAMAP-Rule" id="MF_01334"/>
    </source>
</evidence>
<evidence type="ECO:0000256" key="2">
    <source>
        <dbReference type="SAM" id="MobiDB-lite"/>
    </source>
</evidence>
<evidence type="ECO:0000305" key="3"/>
<proteinExistence type="inferred from homology"/>
<gene>
    <name evidence="1" type="primary">rplY</name>
    <name evidence="1" type="synonym">ctc</name>
    <name type="ordered locus">COXBURSA331_A2041</name>
</gene>